<protein>
    <recommendedName>
        <fullName evidence="1">Anhydro-N-acetylmuramic acid kinase</fullName>
        <ecNumber evidence="1">2.7.1.170</ecNumber>
    </recommendedName>
    <alternativeName>
        <fullName evidence="1">AnhMurNAc kinase</fullName>
    </alternativeName>
</protein>
<feature type="chain" id="PRO_0000250044" description="Anhydro-N-acetylmuramic acid kinase">
    <location>
        <begin position="1"/>
        <end position="371"/>
    </location>
</feature>
<feature type="binding site" evidence="1">
    <location>
        <begin position="15"/>
        <end position="22"/>
    </location>
    <ligand>
        <name>ATP</name>
        <dbReference type="ChEBI" id="CHEBI:30616"/>
    </ligand>
</feature>
<gene>
    <name evidence="1" type="primary">anmK</name>
    <name type="ordered locus">RHOS4_10840</name>
    <name type="ORF">RSP_6056</name>
</gene>
<organism>
    <name type="scientific">Cereibacter sphaeroides (strain ATCC 17023 / DSM 158 / JCM 6121 / CCUG 31486 / LMG 2827 / NBRC 12203 / NCIMB 8253 / ATH 2.4.1.)</name>
    <name type="common">Rhodobacter sphaeroides</name>
    <dbReference type="NCBI Taxonomy" id="272943"/>
    <lineage>
        <taxon>Bacteria</taxon>
        <taxon>Pseudomonadati</taxon>
        <taxon>Pseudomonadota</taxon>
        <taxon>Alphaproteobacteria</taxon>
        <taxon>Rhodobacterales</taxon>
        <taxon>Paracoccaceae</taxon>
        <taxon>Cereibacter</taxon>
    </lineage>
</organism>
<comment type="function">
    <text evidence="1">Catalyzes the specific phosphorylation of 1,6-anhydro-N-acetylmuramic acid (anhMurNAc) with the simultaneous cleavage of the 1,6-anhydro ring, generating MurNAc-6-P. Is required for the utilization of anhMurNAc either imported from the medium or derived from its own cell wall murein, and thus plays a role in cell wall recycling.</text>
</comment>
<comment type="catalytic activity">
    <reaction evidence="1">
        <text>1,6-anhydro-N-acetyl-beta-muramate + ATP + H2O = N-acetyl-D-muramate 6-phosphate + ADP + H(+)</text>
        <dbReference type="Rhea" id="RHEA:24952"/>
        <dbReference type="ChEBI" id="CHEBI:15377"/>
        <dbReference type="ChEBI" id="CHEBI:15378"/>
        <dbReference type="ChEBI" id="CHEBI:30616"/>
        <dbReference type="ChEBI" id="CHEBI:58690"/>
        <dbReference type="ChEBI" id="CHEBI:58722"/>
        <dbReference type="ChEBI" id="CHEBI:456216"/>
        <dbReference type="EC" id="2.7.1.170"/>
    </reaction>
</comment>
<comment type="pathway">
    <text evidence="1">Amino-sugar metabolism; 1,6-anhydro-N-acetylmuramate degradation.</text>
</comment>
<comment type="pathway">
    <text evidence="1">Cell wall biogenesis; peptidoglycan recycling.</text>
</comment>
<comment type="similarity">
    <text evidence="1">Belongs to the anhydro-N-acetylmuramic acid kinase family.</text>
</comment>
<proteinExistence type="inferred from homology"/>
<dbReference type="EC" id="2.7.1.170" evidence="1"/>
<dbReference type="EMBL" id="CP000143">
    <property type="protein sequence ID" value="ABA78652.1"/>
    <property type="molecule type" value="Genomic_DNA"/>
</dbReference>
<dbReference type="RefSeq" id="WP_011337527.1">
    <property type="nucleotide sequence ID" value="NC_007493.2"/>
</dbReference>
<dbReference type="RefSeq" id="YP_352553.1">
    <property type="nucleotide sequence ID" value="NC_007493.2"/>
</dbReference>
<dbReference type="SMR" id="Q3J3I2"/>
<dbReference type="STRING" id="272943.RSP_6056"/>
<dbReference type="EnsemblBacteria" id="ABA78652">
    <property type="protein sequence ID" value="ABA78652"/>
    <property type="gene ID" value="RSP_6056"/>
</dbReference>
<dbReference type="GeneID" id="3720108"/>
<dbReference type="KEGG" id="rsp:RSP_6056"/>
<dbReference type="PATRIC" id="fig|272943.9.peg.1410"/>
<dbReference type="eggNOG" id="COG2377">
    <property type="taxonomic scope" value="Bacteria"/>
</dbReference>
<dbReference type="OrthoDB" id="9763949at2"/>
<dbReference type="PhylomeDB" id="Q3J3I2"/>
<dbReference type="UniPathway" id="UPA00343"/>
<dbReference type="UniPathway" id="UPA00544"/>
<dbReference type="Proteomes" id="UP000002703">
    <property type="component" value="Chromosome 1"/>
</dbReference>
<dbReference type="GO" id="GO:0005524">
    <property type="term" value="F:ATP binding"/>
    <property type="evidence" value="ECO:0007669"/>
    <property type="project" value="UniProtKB-UniRule"/>
</dbReference>
<dbReference type="GO" id="GO:0016301">
    <property type="term" value="F:kinase activity"/>
    <property type="evidence" value="ECO:0007669"/>
    <property type="project" value="UniProtKB-KW"/>
</dbReference>
<dbReference type="GO" id="GO:0016773">
    <property type="term" value="F:phosphotransferase activity, alcohol group as acceptor"/>
    <property type="evidence" value="ECO:0007669"/>
    <property type="project" value="UniProtKB-UniRule"/>
</dbReference>
<dbReference type="GO" id="GO:0097175">
    <property type="term" value="P:1,6-anhydro-N-acetyl-beta-muramic acid catabolic process"/>
    <property type="evidence" value="ECO:0007669"/>
    <property type="project" value="UniProtKB-UniRule"/>
</dbReference>
<dbReference type="GO" id="GO:0006040">
    <property type="term" value="P:amino sugar metabolic process"/>
    <property type="evidence" value="ECO:0007669"/>
    <property type="project" value="InterPro"/>
</dbReference>
<dbReference type="GO" id="GO:0009254">
    <property type="term" value="P:peptidoglycan turnover"/>
    <property type="evidence" value="ECO:0007669"/>
    <property type="project" value="UniProtKB-UniRule"/>
</dbReference>
<dbReference type="Gene3D" id="3.30.420.40">
    <property type="match status" value="2"/>
</dbReference>
<dbReference type="HAMAP" id="MF_01270">
    <property type="entry name" value="AnhMurNAc_kinase"/>
    <property type="match status" value="1"/>
</dbReference>
<dbReference type="InterPro" id="IPR005338">
    <property type="entry name" value="Anhydro_N_Ac-Mur_kinase"/>
</dbReference>
<dbReference type="InterPro" id="IPR043129">
    <property type="entry name" value="ATPase_NBD"/>
</dbReference>
<dbReference type="NCBIfam" id="NF007141">
    <property type="entry name" value="PRK09585.1-5"/>
    <property type="match status" value="1"/>
</dbReference>
<dbReference type="PANTHER" id="PTHR30605">
    <property type="entry name" value="ANHYDRO-N-ACETYLMURAMIC ACID KINASE"/>
    <property type="match status" value="1"/>
</dbReference>
<dbReference type="PANTHER" id="PTHR30605:SF0">
    <property type="entry name" value="ANHYDRO-N-ACETYLMURAMIC ACID KINASE"/>
    <property type="match status" value="1"/>
</dbReference>
<dbReference type="Pfam" id="PF03702">
    <property type="entry name" value="AnmK"/>
    <property type="match status" value="1"/>
</dbReference>
<dbReference type="SUPFAM" id="SSF53067">
    <property type="entry name" value="Actin-like ATPase domain"/>
    <property type="match status" value="1"/>
</dbReference>
<name>ANMK_CERS4</name>
<reference key="1">
    <citation type="submission" date="2005-09" db="EMBL/GenBank/DDBJ databases">
        <title>Complete sequence of chromosome 1 of Rhodobacter sphaeroides 2.4.1.</title>
        <authorList>
            <person name="Copeland A."/>
            <person name="Lucas S."/>
            <person name="Lapidus A."/>
            <person name="Barry K."/>
            <person name="Detter J.C."/>
            <person name="Glavina T."/>
            <person name="Hammon N."/>
            <person name="Israni S."/>
            <person name="Pitluck S."/>
            <person name="Richardson P."/>
            <person name="Mackenzie C."/>
            <person name="Choudhary M."/>
            <person name="Larimer F."/>
            <person name="Hauser L.J."/>
            <person name="Land M."/>
            <person name="Donohue T.J."/>
            <person name="Kaplan S."/>
        </authorList>
    </citation>
    <scope>NUCLEOTIDE SEQUENCE [LARGE SCALE GENOMIC DNA]</scope>
    <source>
        <strain>ATCC 17023 / DSM 158 / JCM 6121 / CCUG 31486 / LMG 2827 / NBRC 12203 / NCIMB 8253 / ATH 2.4.1.</strain>
    </source>
</reference>
<evidence type="ECO:0000255" key="1">
    <source>
        <dbReference type="HAMAP-Rule" id="MF_01270"/>
    </source>
</evidence>
<accession>Q3J3I2</accession>
<sequence length="371" mass="38173">MLKGGAVWALGTMSGTSLDGVDAAMVLTDGERILEFGETRYRAYSEAERAVLRAALGRWPGEAAVAEAAEVVEAAHAELLAAFRGAEIVGFHGQTLAHEPGGRGTHQAGSGERLAQALGVPVVWDFRSADVAAGGQGAPLAPFYHFACARRAGADRPVAFLNLGGVGNLTWVDPRQAAPEAPGACLAFDTGPANAPINDLMQARLGRSHDEGGRLAAEGEVAEAVLARFLDHAFFARMPPKSLDRDAFADLLPAVADLSDADAAATLTAAAAAAVARGAAHFPTPVRQLLVTGGGRHNPVLMAMLEARTGIEVVPVEQAGLDGDMLEAQAFAYLAVRVARGLPTSAPSTTGVPACLGGGRMSRPEALALQP</sequence>
<keyword id="KW-0067">ATP-binding</keyword>
<keyword id="KW-0119">Carbohydrate metabolism</keyword>
<keyword id="KW-0418">Kinase</keyword>
<keyword id="KW-0547">Nucleotide-binding</keyword>
<keyword id="KW-1185">Reference proteome</keyword>
<keyword id="KW-0808">Transferase</keyword>